<dbReference type="EC" id="2.3.1.-" evidence="3"/>
<dbReference type="EC" id="2.3.1.116" evidence="3"/>
<dbReference type="EMBL" id="MN756010">
    <property type="protein sequence ID" value="QNN26309.1"/>
    <property type="molecule type" value="mRNA"/>
</dbReference>
<dbReference type="SMR" id="P0DUQ3"/>
<dbReference type="GO" id="GO:0047165">
    <property type="term" value="F:flavonol-3-O-beta-glucoside O-malonyltransferase activity"/>
    <property type="evidence" value="ECO:0000314"/>
    <property type="project" value="UniProtKB"/>
</dbReference>
<dbReference type="GO" id="GO:0050736">
    <property type="term" value="F:O-malonyltransferase activity"/>
    <property type="evidence" value="ECO:0000314"/>
    <property type="project" value="UniProtKB"/>
</dbReference>
<dbReference type="GO" id="GO:0098754">
    <property type="term" value="P:detoxification"/>
    <property type="evidence" value="ECO:0000314"/>
    <property type="project" value="UniProtKB"/>
</dbReference>
<dbReference type="GO" id="GO:0009636">
    <property type="term" value="P:response to toxic substance"/>
    <property type="evidence" value="ECO:0000314"/>
    <property type="project" value="UniProtKB"/>
</dbReference>
<dbReference type="Gene3D" id="3.30.559.10">
    <property type="entry name" value="Chloramphenicol acetyltransferase-like domain"/>
    <property type="match status" value="2"/>
</dbReference>
<dbReference type="InterPro" id="IPR023213">
    <property type="entry name" value="CAT-like_dom_sf"/>
</dbReference>
<dbReference type="InterPro" id="IPR051504">
    <property type="entry name" value="Plant_metabolite_acyltrans"/>
</dbReference>
<dbReference type="PANTHER" id="PTHR31625">
    <property type="match status" value="1"/>
</dbReference>
<dbReference type="Pfam" id="PF02458">
    <property type="entry name" value="Transferase"/>
    <property type="match status" value="1"/>
</dbReference>
<dbReference type="SUPFAM" id="SSF52777">
    <property type="entry name" value="CoA-dependent acyltransferases"/>
    <property type="match status" value="2"/>
</dbReference>
<feature type="chain" id="PRO_0000453286" description="Phenolic glucoside malonyltransferase 1">
    <location>
        <begin position="1"/>
        <end position="461"/>
    </location>
</feature>
<feature type="short sequence motif" description="HXXXD motif" evidence="1">
    <location>
        <begin position="167"/>
        <end position="171"/>
    </location>
</feature>
<feature type="short sequence motif" description="DFGWG motif" evidence="1">
    <location>
        <begin position="400"/>
        <end position="404"/>
    </location>
</feature>
<feature type="active site" description="Proton acceptor" evidence="2">
    <location>
        <position position="167"/>
    </location>
</feature>
<feature type="active site" description="Proton acceptor" evidence="2">
    <location>
        <position position="400"/>
    </location>
</feature>
<feature type="binding site" evidence="1">
    <location>
        <begin position="281"/>
        <end position="282"/>
    </location>
    <ligand>
        <name>malonyl-CoA</name>
        <dbReference type="ChEBI" id="CHEBI:57384"/>
    </ligand>
</feature>
<evidence type="ECO:0000250" key="1">
    <source>
        <dbReference type="UniProtKB" id="Q589Y0"/>
    </source>
</evidence>
<evidence type="ECO:0000250" key="2">
    <source>
        <dbReference type="UniProtKB" id="Q8W1W9"/>
    </source>
</evidence>
<evidence type="ECO:0000269" key="3">
    <source>
    </source>
</evidence>
<evidence type="ECO:0000303" key="4">
    <source>
    </source>
</evidence>
<evidence type="ECO:0000305" key="5"/>
<sequence length="461" mass="51733">MSISSSVAVLNVVQVSPPTAPVNNAFQDRISLTHFDLLALRAPPNQRLFFYETHLPISAFAETVIPKLRDSLSLTLQNFRPLAGTLIWSLHSDEPYIRIKDDDSVPLTIAETDADPQKLFDDPFQQETDLQQLLPPLRVSETEASLLALQITLFPSGDICLGITFHHAAQDGASLALFLKSWAHICRHGDDPPLPQNLIPIFDRDFIDDPKNIKQLFLDHLLTPLTPGGPRNRSVKPMEKPFNDRMHGSFRLTVDDIENLRRRITSLQVQNTSQEPPVRMSTVVVTCAYVLTCFVKAGLTKKHVRFILPADLRKRLQPPVPDNYYGNCVFGCTVDMSSDDLAGQDGLVVAAKTISSVVSELDANDHRTFFENFLLNNTISQEETKVGVGGSIYFSLDEKDFGWGGPKHLKNVPPWPNHIYLAERRDGDKGVDFCLMLAKQEMAEFESKFLDDLKLLEKRSC</sequence>
<proteinExistence type="evidence at protein level"/>
<gene>
    <name evidence="4" type="primary">MAT1</name>
</gene>
<comment type="function">
    <text evidence="3">Phenolic glucoside malonyltransferase that neutralizes phenolic glycosides in host plants (PubMed:33770502). Catalyzes the transfer of a malonyl group from malonyl-CoA to the phenolic glycosides, leading to their detoxification (PubMed:33770502). Phenolic glycosides, which are among the most abundant plant secondary metabolites, act as plant defense compounds: they strongly affect growth, development and behavior of insect herbivores (PubMed:33770502). Has malonyltransferase activity against flavonoids kaempferol 3-O-glucoside, kaempferol 7-O-glucoside, isoquercetin (quercetin 3-O-beta-D-glucopyranoside), apigetrin (apigenin 7-O-beta-D-glucoside) and prunin (naringenin 7-O-beta-D-glucoside) (PubMed:33770502). Also has activity toward non-flavonoid rhaponticin, but with lower efficiency (PubMed:33770502).</text>
</comment>
<comment type="catalytic activity">
    <reaction evidence="3">
        <text>a flavonol 3-O-beta-D-glucoside + malonyl-CoA = a flavonol 3-O-(6-O-malonyl-beta-D-glucoside) + CoA</text>
        <dbReference type="Rhea" id="RHEA:20085"/>
        <dbReference type="ChEBI" id="CHEBI:16816"/>
        <dbReference type="ChEBI" id="CHEBI:57287"/>
        <dbReference type="ChEBI" id="CHEBI:57384"/>
        <dbReference type="ChEBI" id="CHEBI:58034"/>
        <dbReference type="EC" id="2.3.1.116"/>
    </reaction>
    <physiologicalReaction direction="left-to-right" evidence="3">
        <dbReference type="Rhea" id="RHEA:20086"/>
    </physiologicalReaction>
</comment>
<comment type="catalytic activity">
    <reaction evidence="3">
        <text>kaempferol 3-O-beta-D-glucoside + malonyl-CoA = kaempferol 3-O-(6-O-malonyl-beta-D-glucoside) + CoA</text>
        <dbReference type="Rhea" id="RHEA:67336"/>
        <dbReference type="ChEBI" id="CHEBI:57287"/>
        <dbReference type="ChEBI" id="CHEBI:57384"/>
        <dbReference type="ChEBI" id="CHEBI:169942"/>
        <dbReference type="ChEBI" id="CHEBI:169943"/>
    </reaction>
    <physiologicalReaction direction="left-to-right" evidence="3">
        <dbReference type="Rhea" id="RHEA:67337"/>
    </physiologicalReaction>
</comment>
<comment type="catalytic activity">
    <reaction evidence="3">
        <text>quercetin 3-O-beta-D-glucoside + malonyl-CoA = quercetin 3-O-(6-O-malonyl-beta-D-glucoside) + CoA</text>
        <dbReference type="Rhea" id="RHEA:67340"/>
        <dbReference type="ChEBI" id="CHEBI:57287"/>
        <dbReference type="ChEBI" id="CHEBI:57384"/>
        <dbReference type="ChEBI" id="CHEBI:144437"/>
        <dbReference type="ChEBI" id="CHEBI:169948"/>
    </reaction>
    <physiologicalReaction direction="left-to-right" evidence="3">
        <dbReference type="Rhea" id="RHEA:67341"/>
    </physiologicalReaction>
</comment>
<comment type="catalytic activity">
    <reaction evidence="3">
        <text>a flavonol 7-O-beta-D-glucoside + malonyl-CoA = a flavonol 7-O-(6-O-malonyl-beta-D-glucoside) + CoA</text>
        <dbReference type="Rhea" id="RHEA:58796"/>
        <dbReference type="ChEBI" id="CHEBI:52144"/>
        <dbReference type="ChEBI" id="CHEBI:57287"/>
        <dbReference type="ChEBI" id="CHEBI:57384"/>
        <dbReference type="ChEBI" id="CHEBI:142805"/>
    </reaction>
    <physiologicalReaction direction="left-to-right" evidence="3">
        <dbReference type="Rhea" id="RHEA:58797"/>
    </physiologicalReaction>
</comment>
<comment type="catalytic activity">
    <reaction evidence="3">
        <text>(2S)-naringenin 7-O-beta-D-glucoside + malonyl-CoA = (2S)-naringenin 7-O-(6-O-malonyl-beta-D-glucoside) + CoA</text>
        <dbReference type="Rhea" id="RHEA:67356"/>
        <dbReference type="ChEBI" id="CHEBI:28327"/>
        <dbReference type="ChEBI" id="CHEBI:57287"/>
        <dbReference type="ChEBI" id="CHEBI:57384"/>
        <dbReference type="ChEBI" id="CHEBI:169950"/>
    </reaction>
    <physiologicalReaction direction="left-to-right" evidence="3">
        <dbReference type="Rhea" id="RHEA:67357"/>
    </physiologicalReaction>
</comment>
<comment type="catalytic activity">
    <reaction evidence="3">
        <text>kaempferol 7-O-beta-D-glucoside + malonyl-CoA = kaempferol 7-O-(6-O-malonyl-beta-D-glucoside) + CoA</text>
        <dbReference type="Rhea" id="RHEA:67344"/>
        <dbReference type="ChEBI" id="CHEBI:57287"/>
        <dbReference type="ChEBI" id="CHEBI:57384"/>
        <dbReference type="ChEBI" id="CHEBI:169944"/>
        <dbReference type="ChEBI" id="CHEBI:169945"/>
    </reaction>
    <physiologicalReaction direction="left-to-right" evidence="3">
        <dbReference type="Rhea" id="RHEA:67345"/>
    </physiologicalReaction>
</comment>
<comment type="catalytic activity">
    <reaction evidence="3">
        <text>apigenin 7-O-beta-D-glucoside + malonyl-CoA = apigenin 7-O-(6-O-malonyl-beta-D-glucoside) + CoA</text>
        <dbReference type="Rhea" id="RHEA:67348"/>
        <dbReference type="ChEBI" id="CHEBI:57287"/>
        <dbReference type="ChEBI" id="CHEBI:57384"/>
        <dbReference type="ChEBI" id="CHEBI:77722"/>
        <dbReference type="ChEBI" id="CHEBI:169949"/>
    </reaction>
    <physiologicalReaction direction="left-to-right" evidence="3">
        <dbReference type="Rhea" id="RHEA:67349"/>
    </physiologicalReaction>
</comment>
<comment type="catalytic activity">
    <reaction evidence="3">
        <text>rhaponticin + malonyl-CoA = 6-O-malonyl-rhaponticin + CoA</text>
        <dbReference type="Rhea" id="RHEA:67352"/>
        <dbReference type="ChEBI" id="CHEBI:8824"/>
        <dbReference type="ChEBI" id="CHEBI:57287"/>
        <dbReference type="ChEBI" id="CHEBI:57384"/>
        <dbReference type="ChEBI" id="CHEBI:169946"/>
    </reaction>
    <physiologicalReaction direction="left-to-right" evidence="3">
        <dbReference type="Rhea" id="RHEA:67353"/>
    </physiologicalReaction>
</comment>
<comment type="tissue specificity">
    <text evidence="3">Expressed in all tissues (PubMed:33770502). Most highly expressed in the abdomen and especially in the gut (PubMed:33770502).</text>
</comment>
<comment type="developmental stage">
    <text evidence="3">Expressed in all developmental stages with higher expression in adults (PubMed:33770502). Also detected in the egg stage to a much lower level (PubMed:33770502).</text>
</comment>
<comment type="miscellaneous">
    <text evidence="3">MAT1 protein-coding gene was acquired from plants through a plant-to-insect horizontal gene transfer event.</text>
</comment>
<comment type="similarity">
    <text evidence="5">Belongs to the plant acyltransferase family. Phenolic glucoside malonyltransferase subfamily.</text>
</comment>
<comment type="online information" name="Protein Spotlight">
    <link uri="https://www.proteinspotlight.org/back_issues/244/"/>
    <text>For the sake of sap - Issue 244 of February 2022</text>
</comment>
<accession>P0DUQ3</accession>
<accession>A0A861LVW7</accession>
<keyword id="KW-0012">Acyltransferase</keyword>
<keyword id="KW-0216">Detoxification</keyword>
<keyword id="KW-0808">Transferase</keyword>
<protein>
    <recommendedName>
        <fullName evidence="4">Phenolic glucoside malonyltransferase 1</fullName>
        <shortName evidence="4">BtPMaT1</shortName>
        <ecNumber evidence="3">2.3.1.-</ecNumber>
        <ecNumber evidence="3">2.3.1.116</ecNumber>
    </recommendedName>
</protein>
<name>MAT1_BEMTA</name>
<reference key="1">
    <citation type="journal article" date="2021" name="Cell">
        <title>Whitefly hijacks a plant detoxification gene that neutralizes plant toxins.</title>
        <authorList>
            <person name="Xia J."/>
            <person name="Guo Z."/>
            <person name="Yang Z."/>
            <person name="Han H."/>
            <person name="Wang S."/>
            <person name="Xu H."/>
            <person name="Yang X."/>
            <person name="Yang F."/>
            <person name="Wu Q."/>
            <person name="Xie W."/>
            <person name="Zhou X."/>
            <person name="Dermauw W."/>
            <person name="Turlings T.C.J."/>
            <person name="Zhang Y."/>
        </authorList>
    </citation>
    <scope>NUCLEOTIDE SEQUENCE [MRNA]</scope>
    <scope>FUNCTION</scope>
    <scope>CATALYTIC ACTIVITY</scope>
    <scope>TISSUE SPECIFICITY</scope>
    <scope>DEVELOPMENTAL STAGE</scope>
    <source>
        <strain>MED</strain>
    </source>
</reference>
<organism>
    <name type="scientific">Bemisia tabaci</name>
    <name type="common">Sweetpotato whitefly</name>
    <name type="synonym">Aleurodes tabaci</name>
    <dbReference type="NCBI Taxonomy" id="7038"/>
    <lineage>
        <taxon>Eukaryota</taxon>
        <taxon>Metazoa</taxon>
        <taxon>Ecdysozoa</taxon>
        <taxon>Arthropoda</taxon>
        <taxon>Hexapoda</taxon>
        <taxon>Insecta</taxon>
        <taxon>Pterygota</taxon>
        <taxon>Neoptera</taxon>
        <taxon>Paraneoptera</taxon>
        <taxon>Hemiptera</taxon>
        <taxon>Sternorrhyncha</taxon>
        <taxon>Aleyrodoidea</taxon>
        <taxon>Aleyrodidae</taxon>
        <taxon>Aleyrodinae</taxon>
        <taxon>Bemisia</taxon>
    </lineage>
</organism>